<gene>
    <name evidence="1" type="primary">rpsD</name>
    <name type="ordered locus">Neut_0582</name>
</gene>
<accession>Q0AIH2</accession>
<comment type="function">
    <text evidence="1">One of the primary rRNA binding proteins, it binds directly to 16S rRNA where it nucleates assembly of the body of the 30S subunit.</text>
</comment>
<comment type="function">
    <text evidence="1">With S5 and S12 plays an important role in translational accuracy.</text>
</comment>
<comment type="subunit">
    <text evidence="1">Part of the 30S ribosomal subunit. Contacts protein S5. The interaction surface between S4 and S5 is involved in control of translational fidelity.</text>
</comment>
<comment type="similarity">
    <text evidence="1">Belongs to the universal ribosomal protein uS4 family.</text>
</comment>
<evidence type="ECO:0000255" key="1">
    <source>
        <dbReference type="HAMAP-Rule" id="MF_01306"/>
    </source>
</evidence>
<evidence type="ECO:0000305" key="2"/>
<reference key="1">
    <citation type="journal article" date="2007" name="Environ. Microbiol.">
        <title>Whole-genome analysis of the ammonia-oxidizing bacterium, Nitrosomonas eutropha C91: implications for niche adaptation.</title>
        <authorList>
            <person name="Stein L.Y."/>
            <person name="Arp D.J."/>
            <person name="Berube P.M."/>
            <person name="Chain P.S."/>
            <person name="Hauser L."/>
            <person name="Jetten M.S."/>
            <person name="Klotz M.G."/>
            <person name="Larimer F.W."/>
            <person name="Norton J.M."/>
            <person name="Op den Camp H.J.M."/>
            <person name="Shin M."/>
            <person name="Wei X."/>
        </authorList>
    </citation>
    <scope>NUCLEOTIDE SEQUENCE [LARGE SCALE GENOMIC DNA]</scope>
    <source>
        <strain>DSM 101675 / C91 / Nm57</strain>
    </source>
</reference>
<organism>
    <name type="scientific">Nitrosomonas eutropha (strain DSM 101675 / C91 / Nm57)</name>
    <dbReference type="NCBI Taxonomy" id="335283"/>
    <lineage>
        <taxon>Bacteria</taxon>
        <taxon>Pseudomonadati</taxon>
        <taxon>Pseudomonadota</taxon>
        <taxon>Betaproteobacteria</taxon>
        <taxon>Nitrosomonadales</taxon>
        <taxon>Nitrosomonadaceae</taxon>
        <taxon>Nitrosomonas</taxon>
    </lineage>
</organism>
<sequence length="208" mass="24064">MARNINPKCRQCRREGEKLFLKGDKCFSDKCPIERRNYPPGQHGQRKTRLSDYAVQLREKQKIRRIYGLLENQFRNVYKRADRQKGITGENLLKLLESRLDNVAYNMGFGASRAEARQIIRHDCILLNGKKANIPSQLIGPGDQIEVAEHAKSYLRIKSSIELAKRRSIPSWLEVDFDNLKGLYKNKPDRSDLSSTINESLVVELYSK</sequence>
<proteinExistence type="inferred from homology"/>
<protein>
    <recommendedName>
        <fullName evidence="1">Small ribosomal subunit protein uS4</fullName>
    </recommendedName>
    <alternativeName>
        <fullName evidence="2">30S ribosomal protein S4</fullName>
    </alternativeName>
</protein>
<dbReference type="EMBL" id="CP000450">
    <property type="protein sequence ID" value="ABI58854.1"/>
    <property type="molecule type" value="Genomic_DNA"/>
</dbReference>
<dbReference type="RefSeq" id="WP_011633695.1">
    <property type="nucleotide sequence ID" value="NC_008344.1"/>
</dbReference>
<dbReference type="SMR" id="Q0AIH2"/>
<dbReference type="STRING" id="335283.Neut_0582"/>
<dbReference type="KEGG" id="net:Neut_0582"/>
<dbReference type="eggNOG" id="COG0522">
    <property type="taxonomic scope" value="Bacteria"/>
</dbReference>
<dbReference type="HOGENOM" id="CLU_092403_0_2_4"/>
<dbReference type="OrthoDB" id="9803672at2"/>
<dbReference type="Proteomes" id="UP000001966">
    <property type="component" value="Chromosome"/>
</dbReference>
<dbReference type="GO" id="GO:0015935">
    <property type="term" value="C:small ribosomal subunit"/>
    <property type="evidence" value="ECO:0007669"/>
    <property type="project" value="InterPro"/>
</dbReference>
<dbReference type="GO" id="GO:0019843">
    <property type="term" value="F:rRNA binding"/>
    <property type="evidence" value="ECO:0007669"/>
    <property type="project" value="UniProtKB-UniRule"/>
</dbReference>
<dbReference type="GO" id="GO:0003735">
    <property type="term" value="F:structural constituent of ribosome"/>
    <property type="evidence" value="ECO:0007669"/>
    <property type="project" value="InterPro"/>
</dbReference>
<dbReference type="GO" id="GO:0042274">
    <property type="term" value="P:ribosomal small subunit biogenesis"/>
    <property type="evidence" value="ECO:0007669"/>
    <property type="project" value="TreeGrafter"/>
</dbReference>
<dbReference type="GO" id="GO:0006412">
    <property type="term" value="P:translation"/>
    <property type="evidence" value="ECO:0007669"/>
    <property type="project" value="UniProtKB-UniRule"/>
</dbReference>
<dbReference type="CDD" id="cd00165">
    <property type="entry name" value="S4"/>
    <property type="match status" value="1"/>
</dbReference>
<dbReference type="FunFam" id="1.10.1050.10:FF:000001">
    <property type="entry name" value="30S ribosomal protein S4"/>
    <property type="match status" value="1"/>
</dbReference>
<dbReference type="FunFam" id="3.10.290.10:FF:000001">
    <property type="entry name" value="30S ribosomal protein S4"/>
    <property type="match status" value="1"/>
</dbReference>
<dbReference type="Gene3D" id="1.10.1050.10">
    <property type="entry name" value="Ribosomal Protein S4 Delta 41, Chain A, domain 1"/>
    <property type="match status" value="1"/>
</dbReference>
<dbReference type="Gene3D" id="3.10.290.10">
    <property type="entry name" value="RNA-binding S4 domain"/>
    <property type="match status" value="1"/>
</dbReference>
<dbReference type="HAMAP" id="MF_01306_B">
    <property type="entry name" value="Ribosomal_uS4_B"/>
    <property type="match status" value="1"/>
</dbReference>
<dbReference type="InterPro" id="IPR022801">
    <property type="entry name" value="Ribosomal_uS4"/>
</dbReference>
<dbReference type="InterPro" id="IPR005709">
    <property type="entry name" value="Ribosomal_uS4_bac-type"/>
</dbReference>
<dbReference type="InterPro" id="IPR001912">
    <property type="entry name" value="Ribosomal_uS4_N"/>
</dbReference>
<dbReference type="InterPro" id="IPR002942">
    <property type="entry name" value="S4_RNA-bd"/>
</dbReference>
<dbReference type="InterPro" id="IPR036986">
    <property type="entry name" value="S4_RNA-bd_sf"/>
</dbReference>
<dbReference type="NCBIfam" id="NF003717">
    <property type="entry name" value="PRK05327.1"/>
    <property type="match status" value="1"/>
</dbReference>
<dbReference type="NCBIfam" id="TIGR01017">
    <property type="entry name" value="rpsD_bact"/>
    <property type="match status" value="1"/>
</dbReference>
<dbReference type="PANTHER" id="PTHR11831">
    <property type="entry name" value="30S 40S RIBOSOMAL PROTEIN"/>
    <property type="match status" value="1"/>
</dbReference>
<dbReference type="PANTHER" id="PTHR11831:SF4">
    <property type="entry name" value="SMALL RIBOSOMAL SUBUNIT PROTEIN US4M"/>
    <property type="match status" value="1"/>
</dbReference>
<dbReference type="Pfam" id="PF00163">
    <property type="entry name" value="Ribosomal_S4"/>
    <property type="match status" value="1"/>
</dbReference>
<dbReference type="Pfam" id="PF01479">
    <property type="entry name" value="S4"/>
    <property type="match status" value="1"/>
</dbReference>
<dbReference type="SMART" id="SM01390">
    <property type="entry name" value="Ribosomal_S4"/>
    <property type="match status" value="1"/>
</dbReference>
<dbReference type="SMART" id="SM00363">
    <property type="entry name" value="S4"/>
    <property type="match status" value="1"/>
</dbReference>
<dbReference type="SUPFAM" id="SSF55174">
    <property type="entry name" value="Alpha-L RNA-binding motif"/>
    <property type="match status" value="1"/>
</dbReference>
<dbReference type="PROSITE" id="PS50889">
    <property type="entry name" value="S4"/>
    <property type="match status" value="1"/>
</dbReference>
<keyword id="KW-0687">Ribonucleoprotein</keyword>
<keyword id="KW-0689">Ribosomal protein</keyword>
<keyword id="KW-0694">RNA-binding</keyword>
<keyword id="KW-0699">rRNA-binding</keyword>
<name>RS4_NITEC</name>
<feature type="chain" id="PRO_0000293326" description="Small ribosomal subunit protein uS4">
    <location>
        <begin position="1"/>
        <end position="208"/>
    </location>
</feature>
<feature type="domain" description="S4 RNA-binding" evidence="1">
    <location>
        <begin position="98"/>
        <end position="160"/>
    </location>
</feature>